<comment type="function">
    <text evidence="1">Catalyzes the phosphorylation of the hydroxyl group of 4-methyl-5-beta-hydroxyethylthiazole (THZ).</text>
</comment>
<comment type="catalytic activity">
    <reaction evidence="1">
        <text>5-(2-hydroxyethyl)-4-methylthiazole + ATP = 4-methyl-5-(2-phosphooxyethyl)-thiazole + ADP + H(+)</text>
        <dbReference type="Rhea" id="RHEA:24212"/>
        <dbReference type="ChEBI" id="CHEBI:15378"/>
        <dbReference type="ChEBI" id="CHEBI:17957"/>
        <dbReference type="ChEBI" id="CHEBI:30616"/>
        <dbReference type="ChEBI" id="CHEBI:58296"/>
        <dbReference type="ChEBI" id="CHEBI:456216"/>
        <dbReference type="EC" id="2.7.1.50"/>
    </reaction>
</comment>
<comment type="cofactor">
    <cofactor evidence="1">
        <name>Mg(2+)</name>
        <dbReference type="ChEBI" id="CHEBI:18420"/>
    </cofactor>
</comment>
<comment type="pathway">
    <text evidence="1">Cofactor biosynthesis; thiamine diphosphate biosynthesis; 4-methyl-5-(2-phosphoethyl)-thiazole from 5-(2-hydroxyethyl)-4-methylthiazole: step 1/1.</text>
</comment>
<comment type="similarity">
    <text evidence="1">Belongs to the Thz kinase family.</text>
</comment>
<sequence length="267" mass="27441">MPHTEHIWRNVDAVRRQAPLVHSITNFVVMNVTANALLAAGASPIMAHAREEMAELVNIVSSLVLNIGTLSAPWIDSMFLAGAAAHERGIPVVLDPVGAGASTLRTTTAAQLMERVRPAIVRGNGSEIMALAGAAGATRGVDSTRDAHAAADSARALSRRHHCVTVVSGPVDLVTDGDEEVLITGGHELMPRVTGMGCTATVLVAAHAAVAASPLEGAVSGMAAMSAAGSMAAERAAGPGSFAMHFIDALYALSEADIRARVRVGRP</sequence>
<dbReference type="EC" id="2.7.1.50" evidence="1"/>
<dbReference type="EMBL" id="CP001197">
    <property type="protein sequence ID" value="ACL09943.1"/>
    <property type="molecule type" value="Genomic_DNA"/>
</dbReference>
<dbReference type="SMR" id="B8DJ66"/>
<dbReference type="STRING" id="883.DvMF_3006"/>
<dbReference type="KEGG" id="dvm:DvMF_3006"/>
<dbReference type="eggNOG" id="COG2145">
    <property type="taxonomic scope" value="Bacteria"/>
</dbReference>
<dbReference type="HOGENOM" id="CLU_019943_0_1_7"/>
<dbReference type="OrthoDB" id="8909021at2"/>
<dbReference type="UniPathway" id="UPA00060">
    <property type="reaction ID" value="UER00139"/>
</dbReference>
<dbReference type="GO" id="GO:0005524">
    <property type="term" value="F:ATP binding"/>
    <property type="evidence" value="ECO:0007669"/>
    <property type="project" value="UniProtKB-UniRule"/>
</dbReference>
<dbReference type="GO" id="GO:0004417">
    <property type="term" value="F:hydroxyethylthiazole kinase activity"/>
    <property type="evidence" value="ECO:0007669"/>
    <property type="project" value="UniProtKB-UniRule"/>
</dbReference>
<dbReference type="GO" id="GO:0000287">
    <property type="term" value="F:magnesium ion binding"/>
    <property type="evidence" value="ECO:0007669"/>
    <property type="project" value="UniProtKB-UniRule"/>
</dbReference>
<dbReference type="GO" id="GO:0009228">
    <property type="term" value="P:thiamine biosynthetic process"/>
    <property type="evidence" value="ECO:0007669"/>
    <property type="project" value="UniProtKB-KW"/>
</dbReference>
<dbReference type="GO" id="GO:0009229">
    <property type="term" value="P:thiamine diphosphate biosynthetic process"/>
    <property type="evidence" value="ECO:0007669"/>
    <property type="project" value="UniProtKB-UniRule"/>
</dbReference>
<dbReference type="CDD" id="cd01170">
    <property type="entry name" value="THZ_kinase"/>
    <property type="match status" value="1"/>
</dbReference>
<dbReference type="Gene3D" id="3.40.1190.20">
    <property type="match status" value="1"/>
</dbReference>
<dbReference type="HAMAP" id="MF_00228">
    <property type="entry name" value="Thz_kinase"/>
    <property type="match status" value="1"/>
</dbReference>
<dbReference type="InterPro" id="IPR000417">
    <property type="entry name" value="Hyethyz_kinase"/>
</dbReference>
<dbReference type="InterPro" id="IPR029056">
    <property type="entry name" value="Ribokinase-like"/>
</dbReference>
<dbReference type="NCBIfam" id="NF006830">
    <property type="entry name" value="PRK09355.1"/>
    <property type="match status" value="1"/>
</dbReference>
<dbReference type="NCBIfam" id="TIGR00694">
    <property type="entry name" value="thiM"/>
    <property type="match status" value="1"/>
</dbReference>
<dbReference type="Pfam" id="PF02110">
    <property type="entry name" value="HK"/>
    <property type="match status" value="1"/>
</dbReference>
<dbReference type="PIRSF" id="PIRSF000513">
    <property type="entry name" value="Thz_kinase"/>
    <property type="match status" value="1"/>
</dbReference>
<dbReference type="PRINTS" id="PR01099">
    <property type="entry name" value="HYETHTZKNASE"/>
</dbReference>
<dbReference type="SUPFAM" id="SSF53613">
    <property type="entry name" value="Ribokinase-like"/>
    <property type="match status" value="1"/>
</dbReference>
<organism>
    <name type="scientific">Nitratidesulfovibrio vulgaris (strain DSM 19637 / Miyazaki F)</name>
    <name type="common">Desulfovibrio vulgaris</name>
    <dbReference type="NCBI Taxonomy" id="883"/>
    <lineage>
        <taxon>Bacteria</taxon>
        <taxon>Pseudomonadati</taxon>
        <taxon>Thermodesulfobacteriota</taxon>
        <taxon>Desulfovibrionia</taxon>
        <taxon>Desulfovibrionales</taxon>
        <taxon>Desulfovibrionaceae</taxon>
        <taxon>Nitratidesulfovibrio</taxon>
    </lineage>
</organism>
<name>THIM_NITV9</name>
<evidence type="ECO:0000255" key="1">
    <source>
        <dbReference type="HAMAP-Rule" id="MF_00228"/>
    </source>
</evidence>
<keyword id="KW-0067">ATP-binding</keyword>
<keyword id="KW-0418">Kinase</keyword>
<keyword id="KW-0460">Magnesium</keyword>
<keyword id="KW-0479">Metal-binding</keyword>
<keyword id="KW-0547">Nucleotide-binding</keyword>
<keyword id="KW-0784">Thiamine biosynthesis</keyword>
<keyword id="KW-0808">Transferase</keyword>
<feature type="chain" id="PRO_1000198117" description="Hydroxyethylthiazole kinase">
    <location>
        <begin position="1"/>
        <end position="267"/>
    </location>
</feature>
<feature type="binding site" evidence="1">
    <location>
        <position position="46"/>
    </location>
    <ligand>
        <name>substrate</name>
    </ligand>
</feature>
<feature type="binding site" evidence="1">
    <location>
        <position position="122"/>
    </location>
    <ligand>
        <name>ATP</name>
        <dbReference type="ChEBI" id="CHEBI:30616"/>
    </ligand>
</feature>
<feature type="binding site" evidence="1">
    <location>
        <position position="168"/>
    </location>
    <ligand>
        <name>ATP</name>
        <dbReference type="ChEBI" id="CHEBI:30616"/>
    </ligand>
</feature>
<feature type="binding site" evidence="1">
    <location>
        <position position="195"/>
    </location>
    <ligand>
        <name>substrate</name>
    </ligand>
</feature>
<accession>B8DJ66</accession>
<proteinExistence type="inferred from homology"/>
<protein>
    <recommendedName>
        <fullName evidence="1">Hydroxyethylthiazole kinase</fullName>
        <ecNumber evidence="1">2.7.1.50</ecNumber>
    </recommendedName>
    <alternativeName>
        <fullName evidence="1">4-methyl-5-beta-hydroxyethylthiazole kinase</fullName>
        <shortName evidence="1">TH kinase</shortName>
        <shortName evidence="1">Thz kinase</shortName>
    </alternativeName>
</protein>
<reference key="1">
    <citation type="submission" date="2008-10" db="EMBL/GenBank/DDBJ databases">
        <title>Complete sequence of Desulfovibrio vulgaris str. 'Miyazaki F'.</title>
        <authorList>
            <person name="Lucas S."/>
            <person name="Copeland A."/>
            <person name="Lapidus A."/>
            <person name="Glavina del Rio T."/>
            <person name="Dalin E."/>
            <person name="Tice H."/>
            <person name="Bruce D."/>
            <person name="Goodwin L."/>
            <person name="Pitluck S."/>
            <person name="Sims D."/>
            <person name="Brettin T."/>
            <person name="Detter J.C."/>
            <person name="Han C."/>
            <person name="Larimer F."/>
            <person name="Land M."/>
            <person name="Hauser L."/>
            <person name="Kyrpides N."/>
            <person name="Mikhailova N."/>
            <person name="Hazen T.C."/>
            <person name="Richardson P."/>
        </authorList>
    </citation>
    <scope>NUCLEOTIDE SEQUENCE [LARGE SCALE GENOMIC DNA]</scope>
    <source>
        <strain>DSM 19637 / Miyazaki F</strain>
    </source>
</reference>
<gene>
    <name evidence="1" type="primary">thiM</name>
    <name type="ordered locus">DvMF_3006</name>
</gene>